<keyword id="KW-1003">Cell membrane</keyword>
<keyword id="KW-0449">Lipoprotein</keyword>
<keyword id="KW-0472">Membrane</keyword>
<keyword id="KW-0519">Myristate</keyword>
<keyword id="KW-1185">Reference proteome</keyword>
<protein>
    <recommendedName>
        <fullName>Hypersensitive-induced response protein 4</fullName>
        <shortName>AtHIR4</shortName>
    </recommendedName>
</protein>
<comment type="subunit">
    <text evidence="2">Self-interacts and forms heteromers. Interacts with NB-LRR class of R proteins before R proteins (e.g. RPS2 or RPM1) are activated by the effectors.</text>
</comment>
<comment type="subcellular location">
    <subcellularLocation>
        <location evidence="4 5">Cell membrane</location>
        <topology evidence="3">Lipid-anchor</topology>
        <orientation evidence="4 5">Cytoplasmic side</orientation>
    </subcellularLocation>
</comment>
<organism>
    <name type="scientific">Arabidopsis thaliana</name>
    <name type="common">Mouse-ear cress</name>
    <dbReference type="NCBI Taxonomy" id="3702"/>
    <lineage>
        <taxon>Eukaryota</taxon>
        <taxon>Viridiplantae</taxon>
        <taxon>Streptophyta</taxon>
        <taxon>Embryophyta</taxon>
        <taxon>Tracheophyta</taxon>
        <taxon>Spermatophyta</taxon>
        <taxon>Magnoliopsida</taxon>
        <taxon>eudicotyledons</taxon>
        <taxon>Gunneridae</taxon>
        <taxon>Pentapetalae</taxon>
        <taxon>rosids</taxon>
        <taxon>malvids</taxon>
        <taxon>Brassicales</taxon>
        <taxon>Brassicaceae</taxon>
        <taxon>Camelineae</taxon>
        <taxon>Arabidopsis</taxon>
    </lineage>
</organism>
<evidence type="ECO:0000255" key="1"/>
<evidence type="ECO:0000269" key="2">
    <source ref="6"/>
</evidence>
<evidence type="ECO:0000305" key="3"/>
<evidence type="ECO:0000305" key="4">
    <source>
    </source>
</evidence>
<evidence type="ECO:0000305" key="5">
    <source ref="6"/>
</evidence>
<accession>Q9FHM7</accession>
<gene>
    <name type="primary">HIR4</name>
    <name type="ordered locus">At5g51570</name>
    <name type="ORF">K17N15.12</name>
</gene>
<proteinExistence type="evidence at protein level"/>
<sequence>MGNTYCILGGCIEQASVGVVERWGRFEHIAEPGCHFFNPLAGQWLAGVLSTRIKSLDVKIETKTKDNVFVQLVCSIQYRVVKASADDAFYELQNPKEQIQAYVFDVVRALVPMMTLDALFEQKGEVAKSVLEELEKVMGAYGYSIEHILMVDIIPDPSVRKAMNEINAAQRLQLASVYKGEAEKILQVKRAEAEAEAKYLGGVGVARQRQAITDGLRENILNFSDKVEGTSAKEVMDLIMITQYFDTIRDLGNSSKNTTVFLPHGPGHVRDISDQIRNGMMEAAASTQVNDV</sequence>
<dbReference type="EMBL" id="AB018109">
    <property type="protein sequence ID" value="BAB08673.1"/>
    <property type="molecule type" value="Genomic_DNA"/>
</dbReference>
<dbReference type="EMBL" id="CP002688">
    <property type="protein sequence ID" value="AED96099.1"/>
    <property type="molecule type" value="Genomic_DNA"/>
</dbReference>
<dbReference type="EMBL" id="BT006203">
    <property type="protein sequence ID" value="AAP12852.1"/>
    <property type="molecule type" value="mRNA"/>
</dbReference>
<dbReference type="EMBL" id="AK227961">
    <property type="protein sequence ID" value="BAE99929.1"/>
    <property type="molecule type" value="mRNA"/>
</dbReference>
<dbReference type="RefSeq" id="NP_199970.1">
    <property type="nucleotide sequence ID" value="NM_124536.4"/>
</dbReference>
<dbReference type="SMR" id="Q9FHM7"/>
<dbReference type="BioGRID" id="20476">
    <property type="interactions" value="5"/>
</dbReference>
<dbReference type="FunCoup" id="Q9FHM7">
    <property type="interactions" value="158"/>
</dbReference>
<dbReference type="IntAct" id="Q9FHM7">
    <property type="interactions" value="1"/>
</dbReference>
<dbReference type="STRING" id="3702.Q9FHM7"/>
<dbReference type="SwissPalm" id="Q9FHM7"/>
<dbReference type="PaxDb" id="3702-AT5G51570.1"/>
<dbReference type="ProteomicsDB" id="230191"/>
<dbReference type="EnsemblPlants" id="AT5G51570.1">
    <property type="protein sequence ID" value="AT5G51570.1"/>
    <property type="gene ID" value="AT5G51570"/>
</dbReference>
<dbReference type="GeneID" id="835231"/>
<dbReference type="Gramene" id="AT5G51570.1">
    <property type="protein sequence ID" value="AT5G51570.1"/>
    <property type="gene ID" value="AT5G51570"/>
</dbReference>
<dbReference type="KEGG" id="ath:AT5G51570"/>
<dbReference type="Araport" id="AT5G51570"/>
<dbReference type="TAIR" id="AT5G51570">
    <property type="gene designation" value="HIR3"/>
</dbReference>
<dbReference type="eggNOG" id="KOG2620">
    <property type="taxonomic scope" value="Eukaryota"/>
</dbReference>
<dbReference type="HOGENOM" id="CLU_024949_5_1_1"/>
<dbReference type="InParanoid" id="Q9FHM7"/>
<dbReference type="OMA" id="AMTQQMK"/>
<dbReference type="OrthoDB" id="434619at2759"/>
<dbReference type="PhylomeDB" id="Q9FHM7"/>
<dbReference type="PRO" id="PR:Q9FHM7"/>
<dbReference type="Proteomes" id="UP000006548">
    <property type="component" value="Chromosome 5"/>
</dbReference>
<dbReference type="ExpressionAtlas" id="Q9FHM7">
    <property type="expression patterns" value="baseline and differential"/>
</dbReference>
<dbReference type="GO" id="GO:0005794">
    <property type="term" value="C:Golgi apparatus"/>
    <property type="evidence" value="ECO:0007005"/>
    <property type="project" value="TAIR"/>
</dbReference>
<dbReference type="GO" id="GO:0000325">
    <property type="term" value="C:plant-type vacuole"/>
    <property type="evidence" value="ECO:0007005"/>
    <property type="project" value="TAIR"/>
</dbReference>
<dbReference type="GO" id="GO:0005886">
    <property type="term" value="C:plasma membrane"/>
    <property type="evidence" value="ECO:0007005"/>
    <property type="project" value="TAIR"/>
</dbReference>
<dbReference type="GO" id="GO:0009506">
    <property type="term" value="C:plasmodesma"/>
    <property type="evidence" value="ECO:0007005"/>
    <property type="project" value="TAIR"/>
</dbReference>
<dbReference type="GO" id="GO:0009536">
    <property type="term" value="C:plastid"/>
    <property type="evidence" value="ECO:0007005"/>
    <property type="project" value="TAIR"/>
</dbReference>
<dbReference type="GO" id="GO:0005773">
    <property type="term" value="C:vacuole"/>
    <property type="evidence" value="ECO:0007005"/>
    <property type="project" value="TAIR"/>
</dbReference>
<dbReference type="CDD" id="cd03407">
    <property type="entry name" value="SPFH_like_u4"/>
    <property type="match status" value="1"/>
</dbReference>
<dbReference type="Gene3D" id="3.30.479.30">
    <property type="entry name" value="Band 7 domain"/>
    <property type="match status" value="1"/>
</dbReference>
<dbReference type="InterPro" id="IPR050710">
    <property type="entry name" value="Band7/mec-2_domain"/>
</dbReference>
<dbReference type="InterPro" id="IPR001107">
    <property type="entry name" value="Band_7"/>
</dbReference>
<dbReference type="InterPro" id="IPR036013">
    <property type="entry name" value="Band_7/SPFH_dom_sf"/>
</dbReference>
<dbReference type="PANTHER" id="PTHR43327:SF11">
    <property type="entry name" value="HYPERSENSITIVE-INDUCED RESPONSE PROTEIN 4"/>
    <property type="match status" value="1"/>
</dbReference>
<dbReference type="PANTHER" id="PTHR43327">
    <property type="entry name" value="STOMATIN-LIKE PROTEIN 2, MITOCHONDRIAL"/>
    <property type="match status" value="1"/>
</dbReference>
<dbReference type="Pfam" id="PF01145">
    <property type="entry name" value="Band_7"/>
    <property type="match status" value="1"/>
</dbReference>
<dbReference type="SMART" id="SM00244">
    <property type="entry name" value="PHB"/>
    <property type="match status" value="1"/>
</dbReference>
<dbReference type="SUPFAM" id="SSF117892">
    <property type="entry name" value="Band 7/SPFH domain"/>
    <property type="match status" value="1"/>
</dbReference>
<name>HIR4_ARATH</name>
<reference key="1">
    <citation type="journal article" date="2000" name="DNA Res.">
        <title>Structural analysis of Arabidopsis thaliana chromosome 5. X. Sequence features of the regions of 3,076,755 bp covered by sixty P1 and TAC clones.</title>
        <authorList>
            <person name="Sato S."/>
            <person name="Nakamura Y."/>
            <person name="Kaneko T."/>
            <person name="Katoh T."/>
            <person name="Asamizu E."/>
            <person name="Kotani H."/>
            <person name="Tabata S."/>
        </authorList>
    </citation>
    <scope>NUCLEOTIDE SEQUENCE [LARGE SCALE GENOMIC DNA]</scope>
    <source>
        <strain>cv. Columbia</strain>
    </source>
</reference>
<reference key="2">
    <citation type="journal article" date="2017" name="Plant J.">
        <title>Araport11: a complete reannotation of the Arabidopsis thaliana reference genome.</title>
        <authorList>
            <person name="Cheng C.Y."/>
            <person name="Krishnakumar V."/>
            <person name="Chan A.P."/>
            <person name="Thibaud-Nissen F."/>
            <person name="Schobel S."/>
            <person name="Town C.D."/>
        </authorList>
    </citation>
    <scope>GENOME REANNOTATION</scope>
    <source>
        <strain>cv. Columbia</strain>
    </source>
</reference>
<reference key="3">
    <citation type="journal article" date="2003" name="Science">
        <title>Empirical analysis of transcriptional activity in the Arabidopsis genome.</title>
        <authorList>
            <person name="Yamada K."/>
            <person name="Lim J."/>
            <person name="Dale J.M."/>
            <person name="Chen H."/>
            <person name="Shinn P."/>
            <person name="Palm C.J."/>
            <person name="Southwick A.M."/>
            <person name="Wu H.C."/>
            <person name="Kim C.J."/>
            <person name="Nguyen M."/>
            <person name="Pham P.K."/>
            <person name="Cheuk R.F."/>
            <person name="Karlin-Newmann G."/>
            <person name="Liu S.X."/>
            <person name="Lam B."/>
            <person name="Sakano H."/>
            <person name="Wu T."/>
            <person name="Yu G."/>
            <person name="Miranda M."/>
            <person name="Quach H.L."/>
            <person name="Tripp M."/>
            <person name="Chang C.H."/>
            <person name="Lee J.M."/>
            <person name="Toriumi M.J."/>
            <person name="Chan M.M."/>
            <person name="Tang C.C."/>
            <person name="Onodera C.S."/>
            <person name="Deng J.M."/>
            <person name="Akiyama K."/>
            <person name="Ansari Y."/>
            <person name="Arakawa T."/>
            <person name="Banh J."/>
            <person name="Banno F."/>
            <person name="Bowser L."/>
            <person name="Brooks S.Y."/>
            <person name="Carninci P."/>
            <person name="Chao Q."/>
            <person name="Choy N."/>
            <person name="Enju A."/>
            <person name="Goldsmith A.D."/>
            <person name="Gurjal M."/>
            <person name="Hansen N.F."/>
            <person name="Hayashizaki Y."/>
            <person name="Johnson-Hopson C."/>
            <person name="Hsuan V.W."/>
            <person name="Iida K."/>
            <person name="Karnes M."/>
            <person name="Khan S."/>
            <person name="Koesema E."/>
            <person name="Ishida J."/>
            <person name="Jiang P.X."/>
            <person name="Jones T."/>
            <person name="Kawai J."/>
            <person name="Kamiya A."/>
            <person name="Meyers C."/>
            <person name="Nakajima M."/>
            <person name="Narusaka M."/>
            <person name="Seki M."/>
            <person name="Sakurai T."/>
            <person name="Satou M."/>
            <person name="Tamse R."/>
            <person name="Vaysberg M."/>
            <person name="Wallender E.K."/>
            <person name="Wong C."/>
            <person name="Yamamura Y."/>
            <person name="Yuan S."/>
            <person name="Shinozaki K."/>
            <person name="Davis R.W."/>
            <person name="Theologis A."/>
            <person name="Ecker J.R."/>
        </authorList>
    </citation>
    <scope>NUCLEOTIDE SEQUENCE [LARGE SCALE MRNA]</scope>
    <source>
        <strain>cv. Columbia</strain>
    </source>
</reference>
<reference key="4">
    <citation type="submission" date="2006-07" db="EMBL/GenBank/DDBJ databases">
        <title>Large-scale analysis of RIKEN Arabidopsis full-length (RAFL) cDNAs.</title>
        <authorList>
            <person name="Totoki Y."/>
            <person name="Seki M."/>
            <person name="Ishida J."/>
            <person name="Nakajima M."/>
            <person name="Enju A."/>
            <person name="Kamiya A."/>
            <person name="Narusaka M."/>
            <person name="Shin-i T."/>
            <person name="Nakagawa M."/>
            <person name="Sakamoto N."/>
            <person name="Oishi K."/>
            <person name="Kohara Y."/>
            <person name="Kobayashi M."/>
            <person name="Toyoda A."/>
            <person name="Sakaki Y."/>
            <person name="Sakurai T."/>
            <person name="Iida K."/>
            <person name="Akiyama K."/>
            <person name="Satou M."/>
            <person name="Toyoda T."/>
            <person name="Konagaya A."/>
            <person name="Carninci P."/>
            <person name="Kawai J."/>
            <person name="Hayashizaki Y."/>
            <person name="Shinozaki K."/>
        </authorList>
    </citation>
    <scope>NUCLEOTIDE SEQUENCE [LARGE SCALE MRNA]</scope>
    <source>
        <strain>cv. Columbia</strain>
    </source>
</reference>
<reference key="5">
    <citation type="journal article" date="2007" name="Mol. Cell. Proteomics">
        <title>A high content in lipid-modified peripheral proteins and integral receptor kinases features in the arabidopsis plasma membrane proteome.</title>
        <authorList>
            <person name="Marmagne A."/>
            <person name="Ferro M."/>
            <person name="Meinnel T."/>
            <person name="Bruley C."/>
            <person name="Kuhn L."/>
            <person name="Garin J."/>
            <person name="Barbier-Brygoo H."/>
            <person name="Ephritikhine G."/>
        </authorList>
    </citation>
    <scope>IDENTIFICATION BY MASS SPECTROMETRY</scope>
    <scope>SUBCELLULAR LOCATION [LARGE SCALE ANALYSIS]</scope>
</reference>
<reference key="6">
    <citation type="book" date="2009" name="Proceedings of the 20th international conference on Arabidopsis research">
        <title>New classes of proteins forming complexes with resistance proteins.</title>
        <authorList>
            <person name="Qi Y."/>
            <person name="Katagiri F."/>
        </authorList>
    </citation>
    <scope>INTERACTION WITH RESISTANCE PROTEINS</scope>
    <scope>SUBUNIT</scope>
    <scope>SUBCELLULAR LOCATION</scope>
</reference>
<feature type="initiator methionine" description="Removed" evidence="1">
    <location>
        <position position="1"/>
    </location>
</feature>
<feature type="chain" id="PRO_0000398599" description="Hypersensitive-induced response protein 4">
    <location>
        <begin position="2"/>
        <end position="292"/>
    </location>
</feature>
<feature type="lipid moiety-binding region" description="N-myristoyl glycine" evidence="1">
    <location>
        <position position="2"/>
    </location>
</feature>